<protein>
    <recommendedName>
        <fullName evidence="1">Small ribosomal subunit protein uS10</fullName>
    </recommendedName>
    <alternativeName>
        <fullName evidence="2">30S ribosomal protein S10</fullName>
    </alternativeName>
</protein>
<reference key="1">
    <citation type="submission" date="2006-09" db="EMBL/GenBank/DDBJ databases">
        <title>Complete sequence of chromosome 1 of Shewanella sp. ANA-3.</title>
        <authorList>
            <person name="Copeland A."/>
            <person name="Lucas S."/>
            <person name="Lapidus A."/>
            <person name="Barry K."/>
            <person name="Detter J.C."/>
            <person name="Glavina del Rio T."/>
            <person name="Hammon N."/>
            <person name="Israni S."/>
            <person name="Dalin E."/>
            <person name="Tice H."/>
            <person name="Pitluck S."/>
            <person name="Chertkov O."/>
            <person name="Brettin T."/>
            <person name="Bruce D."/>
            <person name="Han C."/>
            <person name="Tapia R."/>
            <person name="Gilna P."/>
            <person name="Schmutz J."/>
            <person name="Larimer F."/>
            <person name="Land M."/>
            <person name="Hauser L."/>
            <person name="Kyrpides N."/>
            <person name="Kim E."/>
            <person name="Newman D."/>
            <person name="Salticov C."/>
            <person name="Konstantinidis K."/>
            <person name="Klappenback J."/>
            <person name="Tiedje J."/>
            <person name="Richardson P."/>
        </authorList>
    </citation>
    <scope>NUCLEOTIDE SEQUENCE [LARGE SCALE GENOMIC DNA]</scope>
    <source>
        <strain>ANA-3</strain>
    </source>
</reference>
<keyword id="KW-0687">Ribonucleoprotein</keyword>
<keyword id="KW-0689">Ribosomal protein</keyword>
<organism>
    <name type="scientific">Shewanella sp. (strain ANA-3)</name>
    <dbReference type="NCBI Taxonomy" id="94122"/>
    <lineage>
        <taxon>Bacteria</taxon>
        <taxon>Pseudomonadati</taxon>
        <taxon>Pseudomonadota</taxon>
        <taxon>Gammaproteobacteria</taxon>
        <taxon>Alteromonadales</taxon>
        <taxon>Shewanellaceae</taxon>
        <taxon>Shewanella</taxon>
    </lineage>
</organism>
<gene>
    <name evidence="1" type="primary">rpsJ</name>
    <name type="ordered locus">Shewana3_0198</name>
</gene>
<evidence type="ECO:0000255" key="1">
    <source>
        <dbReference type="HAMAP-Rule" id="MF_00508"/>
    </source>
</evidence>
<evidence type="ECO:0000305" key="2"/>
<feature type="chain" id="PRO_1000015113" description="Small ribosomal subunit protein uS10">
    <location>
        <begin position="1"/>
        <end position="103"/>
    </location>
</feature>
<name>RS10_SHESA</name>
<comment type="function">
    <text evidence="1">Involved in the binding of tRNA to the ribosomes.</text>
</comment>
<comment type="subunit">
    <text evidence="1">Part of the 30S ribosomal subunit.</text>
</comment>
<comment type="similarity">
    <text evidence="1">Belongs to the universal ribosomal protein uS10 family.</text>
</comment>
<dbReference type="EMBL" id="CP000469">
    <property type="protein sequence ID" value="ABK46442.1"/>
    <property type="molecule type" value="Genomic_DNA"/>
</dbReference>
<dbReference type="RefSeq" id="WP_011070616.1">
    <property type="nucleotide sequence ID" value="NC_008577.1"/>
</dbReference>
<dbReference type="SMR" id="A0KRM3"/>
<dbReference type="STRING" id="94122.Shewana3_0198"/>
<dbReference type="GeneID" id="94726185"/>
<dbReference type="KEGG" id="shn:Shewana3_0198"/>
<dbReference type="eggNOG" id="COG0051">
    <property type="taxonomic scope" value="Bacteria"/>
</dbReference>
<dbReference type="HOGENOM" id="CLU_122625_1_3_6"/>
<dbReference type="OrthoDB" id="9804464at2"/>
<dbReference type="Proteomes" id="UP000002589">
    <property type="component" value="Chromosome"/>
</dbReference>
<dbReference type="GO" id="GO:1990904">
    <property type="term" value="C:ribonucleoprotein complex"/>
    <property type="evidence" value="ECO:0007669"/>
    <property type="project" value="UniProtKB-KW"/>
</dbReference>
<dbReference type="GO" id="GO:0005840">
    <property type="term" value="C:ribosome"/>
    <property type="evidence" value="ECO:0007669"/>
    <property type="project" value="UniProtKB-KW"/>
</dbReference>
<dbReference type="GO" id="GO:0003735">
    <property type="term" value="F:structural constituent of ribosome"/>
    <property type="evidence" value="ECO:0007669"/>
    <property type="project" value="InterPro"/>
</dbReference>
<dbReference type="GO" id="GO:0000049">
    <property type="term" value="F:tRNA binding"/>
    <property type="evidence" value="ECO:0007669"/>
    <property type="project" value="UniProtKB-UniRule"/>
</dbReference>
<dbReference type="GO" id="GO:0006412">
    <property type="term" value="P:translation"/>
    <property type="evidence" value="ECO:0007669"/>
    <property type="project" value="UniProtKB-UniRule"/>
</dbReference>
<dbReference type="FunFam" id="3.30.70.600:FF:000001">
    <property type="entry name" value="30S ribosomal protein S10"/>
    <property type="match status" value="1"/>
</dbReference>
<dbReference type="Gene3D" id="3.30.70.600">
    <property type="entry name" value="Ribosomal protein S10 domain"/>
    <property type="match status" value="1"/>
</dbReference>
<dbReference type="HAMAP" id="MF_00508">
    <property type="entry name" value="Ribosomal_uS10"/>
    <property type="match status" value="1"/>
</dbReference>
<dbReference type="InterPro" id="IPR001848">
    <property type="entry name" value="Ribosomal_uS10"/>
</dbReference>
<dbReference type="InterPro" id="IPR018268">
    <property type="entry name" value="Ribosomal_uS10_CS"/>
</dbReference>
<dbReference type="InterPro" id="IPR027486">
    <property type="entry name" value="Ribosomal_uS10_dom"/>
</dbReference>
<dbReference type="InterPro" id="IPR036838">
    <property type="entry name" value="Ribosomal_uS10_dom_sf"/>
</dbReference>
<dbReference type="NCBIfam" id="NF001861">
    <property type="entry name" value="PRK00596.1"/>
    <property type="match status" value="1"/>
</dbReference>
<dbReference type="NCBIfam" id="TIGR01049">
    <property type="entry name" value="rpsJ_bact"/>
    <property type="match status" value="1"/>
</dbReference>
<dbReference type="PANTHER" id="PTHR11700">
    <property type="entry name" value="30S RIBOSOMAL PROTEIN S10 FAMILY MEMBER"/>
    <property type="match status" value="1"/>
</dbReference>
<dbReference type="Pfam" id="PF00338">
    <property type="entry name" value="Ribosomal_S10"/>
    <property type="match status" value="1"/>
</dbReference>
<dbReference type="PRINTS" id="PR00971">
    <property type="entry name" value="RIBOSOMALS10"/>
</dbReference>
<dbReference type="SMART" id="SM01403">
    <property type="entry name" value="Ribosomal_S10"/>
    <property type="match status" value="1"/>
</dbReference>
<dbReference type="SUPFAM" id="SSF54999">
    <property type="entry name" value="Ribosomal protein S10"/>
    <property type="match status" value="1"/>
</dbReference>
<dbReference type="PROSITE" id="PS00361">
    <property type="entry name" value="RIBOSOMAL_S10"/>
    <property type="match status" value="1"/>
</dbReference>
<accession>A0KRM3</accession>
<sequence length="103" mass="11769">MQNQRIRIRLKGFDHRLIDQSTAEIVETAKRTGAQVRGPIPLPTRKERYTVLISPHVNKDARDQYELRTHKRLVDIVEPTEKTVDALMRLDLAAGVDVQISLG</sequence>
<proteinExistence type="inferred from homology"/>